<gene>
    <name evidence="1" type="primary">pheS</name>
    <name type="ordered locus">BPEN_366</name>
</gene>
<name>SYFA_BLOPB</name>
<comment type="catalytic activity">
    <reaction evidence="1">
        <text>tRNA(Phe) + L-phenylalanine + ATP = L-phenylalanyl-tRNA(Phe) + AMP + diphosphate + H(+)</text>
        <dbReference type="Rhea" id="RHEA:19413"/>
        <dbReference type="Rhea" id="RHEA-COMP:9668"/>
        <dbReference type="Rhea" id="RHEA-COMP:9699"/>
        <dbReference type="ChEBI" id="CHEBI:15378"/>
        <dbReference type="ChEBI" id="CHEBI:30616"/>
        <dbReference type="ChEBI" id="CHEBI:33019"/>
        <dbReference type="ChEBI" id="CHEBI:58095"/>
        <dbReference type="ChEBI" id="CHEBI:78442"/>
        <dbReference type="ChEBI" id="CHEBI:78531"/>
        <dbReference type="ChEBI" id="CHEBI:456215"/>
        <dbReference type="EC" id="6.1.1.20"/>
    </reaction>
</comment>
<comment type="cofactor">
    <cofactor evidence="1">
        <name>Mg(2+)</name>
        <dbReference type="ChEBI" id="CHEBI:18420"/>
    </cofactor>
    <text evidence="1">Binds 2 magnesium ions per tetramer.</text>
</comment>
<comment type="subunit">
    <text evidence="1">Tetramer of two alpha and two beta subunits.</text>
</comment>
<comment type="subcellular location">
    <subcellularLocation>
        <location evidence="1">Cytoplasm</location>
    </subcellularLocation>
</comment>
<comment type="similarity">
    <text evidence="1">Belongs to the class-II aminoacyl-tRNA synthetase family. Phe-tRNA synthetase alpha subunit type 1 subfamily.</text>
</comment>
<keyword id="KW-0030">Aminoacyl-tRNA synthetase</keyword>
<keyword id="KW-0067">ATP-binding</keyword>
<keyword id="KW-0963">Cytoplasm</keyword>
<keyword id="KW-0436">Ligase</keyword>
<keyword id="KW-0460">Magnesium</keyword>
<keyword id="KW-0479">Metal-binding</keyword>
<keyword id="KW-0547">Nucleotide-binding</keyword>
<keyword id="KW-0648">Protein biosynthesis</keyword>
<keyword id="KW-1185">Reference proteome</keyword>
<accession>Q492V1</accession>
<proteinExistence type="inferred from homology"/>
<feature type="chain" id="PRO_0000231966" description="Phenylalanine--tRNA ligase alpha subunit">
    <location>
        <begin position="1"/>
        <end position="331"/>
    </location>
</feature>
<feature type="binding site" evidence="1">
    <location>
        <position position="254"/>
    </location>
    <ligand>
        <name>Mg(2+)</name>
        <dbReference type="ChEBI" id="CHEBI:18420"/>
        <note>shared with beta subunit</note>
    </ligand>
</feature>
<reference key="1">
    <citation type="journal article" date="2005" name="Genome Res.">
        <title>Genome sequence of Blochmannia pennsylvanicus indicates parallel evolutionary trends among bacterial mutualists of insects.</title>
        <authorList>
            <person name="Degnan P.H."/>
            <person name="Lazarus A.B."/>
            <person name="Wernegreen J.J."/>
        </authorList>
    </citation>
    <scope>NUCLEOTIDE SEQUENCE [LARGE SCALE GENOMIC DNA]</scope>
    <source>
        <strain>BPEN</strain>
    </source>
</reference>
<evidence type="ECO:0000255" key="1">
    <source>
        <dbReference type="HAMAP-Rule" id="MF_00281"/>
    </source>
</evidence>
<protein>
    <recommendedName>
        <fullName evidence="1">Phenylalanine--tRNA ligase alpha subunit</fullName>
        <ecNumber evidence="1">6.1.1.20</ecNumber>
    </recommendedName>
    <alternativeName>
        <fullName evidence="1">Phenylalanyl-tRNA synthetase alpha subunit</fullName>
        <shortName evidence="1">PheRS</shortName>
    </alternativeName>
</protein>
<sequence>MSLDPVKKLVILAKSNIMQSNNMDALEAIRIKFLGKKGYLNQHIKNLNDTSLDIKPKLGAAINQAKEDIYTLLIERKNILQSKNIKNTLITDTLDVTLPGRLSDIGTHHPITSTIKRMKIFFNTLGFSVIHGPEIEDDYFNFDALNIPKYHPSRDEHDTFWFDEKRLLRTHTSGVQIRAMINKTPPIRIISFGRVYRKDYDQHHTPMFHQMEGLIVDSNVNFSYLKKILYDFLYNFFETDIILRFRPSYFPFTEPSAEIDVMKKQETGNWLELLGCGMVHPKILHHVDIDTEKFSGFAFGIGIERLTMLQYNIDDIRVFFKNDLQFLDQFK</sequence>
<dbReference type="EC" id="6.1.1.20" evidence="1"/>
<dbReference type="EMBL" id="CP000016">
    <property type="protein sequence ID" value="AAZ40991.1"/>
    <property type="molecule type" value="Genomic_DNA"/>
</dbReference>
<dbReference type="RefSeq" id="WP_011282900.1">
    <property type="nucleotide sequence ID" value="NC_007292.1"/>
</dbReference>
<dbReference type="SMR" id="Q492V1"/>
<dbReference type="STRING" id="291272.BPEN_366"/>
<dbReference type="KEGG" id="bpn:BPEN_366"/>
<dbReference type="eggNOG" id="COG0016">
    <property type="taxonomic scope" value="Bacteria"/>
</dbReference>
<dbReference type="HOGENOM" id="CLU_025086_0_1_6"/>
<dbReference type="OrthoDB" id="9800719at2"/>
<dbReference type="Proteomes" id="UP000007794">
    <property type="component" value="Chromosome"/>
</dbReference>
<dbReference type="GO" id="GO:0005737">
    <property type="term" value="C:cytoplasm"/>
    <property type="evidence" value="ECO:0007669"/>
    <property type="project" value="UniProtKB-SubCell"/>
</dbReference>
<dbReference type="GO" id="GO:0005524">
    <property type="term" value="F:ATP binding"/>
    <property type="evidence" value="ECO:0007669"/>
    <property type="project" value="UniProtKB-UniRule"/>
</dbReference>
<dbReference type="GO" id="GO:0000287">
    <property type="term" value="F:magnesium ion binding"/>
    <property type="evidence" value="ECO:0007669"/>
    <property type="project" value="UniProtKB-UniRule"/>
</dbReference>
<dbReference type="GO" id="GO:0004826">
    <property type="term" value="F:phenylalanine-tRNA ligase activity"/>
    <property type="evidence" value="ECO:0007669"/>
    <property type="project" value="UniProtKB-UniRule"/>
</dbReference>
<dbReference type="GO" id="GO:0000049">
    <property type="term" value="F:tRNA binding"/>
    <property type="evidence" value="ECO:0007669"/>
    <property type="project" value="InterPro"/>
</dbReference>
<dbReference type="GO" id="GO:0006432">
    <property type="term" value="P:phenylalanyl-tRNA aminoacylation"/>
    <property type="evidence" value="ECO:0007669"/>
    <property type="project" value="UniProtKB-UniRule"/>
</dbReference>
<dbReference type="CDD" id="cd00496">
    <property type="entry name" value="PheRS_alpha_core"/>
    <property type="match status" value="1"/>
</dbReference>
<dbReference type="FunFam" id="3.30.930.10:FF:000003">
    <property type="entry name" value="Phenylalanine--tRNA ligase alpha subunit"/>
    <property type="match status" value="1"/>
</dbReference>
<dbReference type="Gene3D" id="3.30.930.10">
    <property type="entry name" value="Bira Bifunctional Protein, Domain 2"/>
    <property type="match status" value="1"/>
</dbReference>
<dbReference type="HAMAP" id="MF_00281">
    <property type="entry name" value="Phe_tRNA_synth_alpha1"/>
    <property type="match status" value="1"/>
</dbReference>
<dbReference type="InterPro" id="IPR006195">
    <property type="entry name" value="aa-tRNA-synth_II"/>
</dbReference>
<dbReference type="InterPro" id="IPR045864">
    <property type="entry name" value="aa-tRNA-synth_II/BPL/LPL"/>
</dbReference>
<dbReference type="InterPro" id="IPR004529">
    <property type="entry name" value="Phe-tRNA-synth_IIc_asu"/>
</dbReference>
<dbReference type="InterPro" id="IPR004188">
    <property type="entry name" value="Phe-tRNA_ligase_II_N"/>
</dbReference>
<dbReference type="InterPro" id="IPR022911">
    <property type="entry name" value="Phe_tRNA_ligase_alpha1_bac"/>
</dbReference>
<dbReference type="InterPro" id="IPR002319">
    <property type="entry name" value="Phenylalanyl-tRNA_Synthase"/>
</dbReference>
<dbReference type="InterPro" id="IPR010978">
    <property type="entry name" value="tRNA-bd_arm"/>
</dbReference>
<dbReference type="NCBIfam" id="TIGR00468">
    <property type="entry name" value="pheS"/>
    <property type="match status" value="1"/>
</dbReference>
<dbReference type="PANTHER" id="PTHR11538:SF41">
    <property type="entry name" value="PHENYLALANINE--TRNA LIGASE, MITOCHONDRIAL"/>
    <property type="match status" value="1"/>
</dbReference>
<dbReference type="PANTHER" id="PTHR11538">
    <property type="entry name" value="PHENYLALANYL-TRNA SYNTHETASE"/>
    <property type="match status" value="1"/>
</dbReference>
<dbReference type="Pfam" id="PF02912">
    <property type="entry name" value="Phe_tRNA-synt_N"/>
    <property type="match status" value="1"/>
</dbReference>
<dbReference type="Pfam" id="PF01409">
    <property type="entry name" value="tRNA-synt_2d"/>
    <property type="match status" value="1"/>
</dbReference>
<dbReference type="SUPFAM" id="SSF55681">
    <property type="entry name" value="Class II aaRS and biotin synthetases"/>
    <property type="match status" value="1"/>
</dbReference>
<dbReference type="SUPFAM" id="SSF46589">
    <property type="entry name" value="tRNA-binding arm"/>
    <property type="match status" value="1"/>
</dbReference>
<dbReference type="PROSITE" id="PS50862">
    <property type="entry name" value="AA_TRNA_LIGASE_II"/>
    <property type="match status" value="1"/>
</dbReference>
<organism>
    <name type="scientific">Blochmanniella pennsylvanica (strain BPEN)</name>
    <dbReference type="NCBI Taxonomy" id="291272"/>
    <lineage>
        <taxon>Bacteria</taxon>
        <taxon>Pseudomonadati</taxon>
        <taxon>Pseudomonadota</taxon>
        <taxon>Gammaproteobacteria</taxon>
        <taxon>Enterobacterales</taxon>
        <taxon>Enterobacteriaceae</taxon>
        <taxon>ant endosymbionts</taxon>
        <taxon>Candidatus Blochmanniella</taxon>
    </lineage>
</organism>